<reference key="1">
    <citation type="submission" date="1998-10" db="EMBL/GenBank/DDBJ databases">
        <title>DNA sequence of the 102 kbases unstable region of Yersinia pestis.</title>
        <authorList>
            <person name="Buchrieser C."/>
            <person name="Rusniok C."/>
            <person name="Couve E."/>
            <person name="Frangeul L."/>
            <person name="Billault A."/>
            <person name="Kunst F."/>
            <person name="Carniel E."/>
            <person name="Glaser P."/>
        </authorList>
    </citation>
    <scope>NUCLEOTIDE SEQUENCE [GENOMIC DNA]</scope>
    <source>
        <strain>6/69</strain>
    </source>
</reference>
<reference key="2">
    <citation type="journal article" date="2001" name="Nature">
        <title>Genome sequence of Yersinia pestis, the causative agent of plague.</title>
        <authorList>
            <person name="Parkhill J."/>
            <person name="Wren B.W."/>
            <person name="Thomson N.R."/>
            <person name="Titball R.W."/>
            <person name="Holden M.T.G."/>
            <person name="Prentice M.B."/>
            <person name="Sebaihia M."/>
            <person name="James K.D."/>
            <person name="Churcher C.M."/>
            <person name="Mungall K.L."/>
            <person name="Baker S."/>
            <person name="Basham D."/>
            <person name="Bentley S.D."/>
            <person name="Brooks K."/>
            <person name="Cerdeno-Tarraga A.-M."/>
            <person name="Chillingworth T."/>
            <person name="Cronin A."/>
            <person name="Davies R.M."/>
            <person name="Davis P."/>
            <person name="Dougan G."/>
            <person name="Feltwell T."/>
            <person name="Hamlin N."/>
            <person name="Holroyd S."/>
            <person name="Jagels K."/>
            <person name="Karlyshev A.V."/>
            <person name="Leather S."/>
            <person name="Moule S."/>
            <person name="Oyston P.C.F."/>
            <person name="Quail M.A."/>
            <person name="Rutherford K.M."/>
            <person name="Simmonds M."/>
            <person name="Skelton J."/>
            <person name="Stevens K."/>
            <person name="Whitehead S."/>
            <person name="Barrell B.G."/>
        </authorList>
    </citation>
    <scope>NUCLEOTIDE SEQUENCE [LARGE SCALE GENOMIC DNA]</scope>
    <source>
        <strain>CO-92 / Biovar Orientalis</strain>
    </source>
</reference>
<reference key="3">
    <citation type="journal article" date="2002" name="J. Bacteriol.">
        <title>Genome sequence of Yersinia pestis KIM.</title>
        <authorList>
            <person name="Deng W."/>
            <person name="Burland V."/>
            <person name="Plunkett G. III"/>
            <person name="Boutin A."/>
            <person name="Mayhew G.F."/>
            <person name="Liss P."/>
            <person name="Perna N.T."/>
            <person name="Rose D.J."/>
            <person name="Mau B."/>
            <person name="Zhou S."/>
            <person name="Schwartz D.C."/>
            <person name="Fetherston J.D."/>
            <person name="Lindler L.E."/>
            <person name="Brubaker R.R."/>
            <person name="Plano G.V."/>
            <person name="Straley S.C."/>
            <person name="McDonough K.A."/>
            <person name="Nilles M.L."/>
            <person name="Matson J.S."/>
            <person name="Blattner F.R."/>
            <person name="Perry R.D."/>
        </authorList>
    </citation>
    <scope>NUCLEOTIDE SEQUENCE [LARGE SCALE GENOMIC DNA]</scope>
    <source>
        <strain>KIM10+ / Biovar Mediaevalis</strain>
    </source>
</reference>
<reference key="4">
    <citation type="journal article" date="2004" name="DNA Res.">
        <title>Complete genome sequence of Yersinia pestis strain 91001, an isolate avirulent to humans.</title>
        <authorList>
            <person name="Song Y."/>
            <person name="Tong Z."/>
            <person name="Wang J."/>
            <person name="Wang L."/>
            <person name="Guo Z."/>
            <person name="Han Y."/>
            <person name="Zhang J."/>
            <person name="Pei D."/>
            <person name="Zhou D."/>
            <person name="Qin H."/>
            <person name="Pang X."/>
            <person name="Han Y."/>
            <person name="Zhai J."/>
            <person name="Li M."/>
            <person name="Cui B."/>
            <person name="Qi Z."/>
            <person name="Jin L."/>
            <person name="Dai R."/>
            <person name="Chen F."/>
            <person name="Li S."/>
            <person name="Ye C."/>
            <person name="Du Z."/>
            <person name="Lin W."/>
            <person name="Wang J."/>
            <person name="Yu J."/>
            <person name="Yang H."/>
            <person name="Wang J."/>
            <person name="Huang P."/>
            <person name="Yang R."/>
        </authorList>
    </citation>
    <scope>NUCLEOTIDE SEQUENCE [LARGE SCALE GENOMIC DNA]</scope>
    <source>
        <strain>91001 / Biovar Mediaevalis</strain>
    </source>
</reference>
<proteinExistence type="inferred from homology"/>
<gene>
    <name evidence="1" type="primary">astB</name>
    <name type="ordered locus">YPO1965</name>
    <name type="ordered locus">y2346</name>
    <name type="ordered locus">YP_1710</name>
</gene>
<name>ASTB_YERPE</name>
<feature type="chain" id="PRO_0000262382" description="N-succinylarginine dihydrolase">
    <location>
        <begin position="1"/>
        <end position="447"/>
    </location>
</feature>
<feature type="active site" evidence="1">
    <location>
        <position position="174"/>
    </location>
</feature>
<feature type="active site" evidence="1">
    <location>
        <position position="249"/>
    </location>
</feature>
<feature type="active site" description="Nucleophile" evidence="1">
    <location>
        <position position="370"/>
    </location>
</feature>
<feature type="binding site" evidence="1">
    <location>
        <begin position="19"/>
        <end position="28"/>
    </location>
    <ligand>
        <name>substrate</name>
    </ligand>
</feature>
<feature type="binding site" evidence="1">
    <location>
        <position position="110"/>
    </location>
    <ligand>
        <name>substrate</name>
    </ligand>
</feature>
<feature type="binding site" evidence="1">
    <location>
        <begin position="137"/>
        <end position="138"/>
    </location>
    <ligand>
        <name>substrate</name>
    </ligand>
</feature>
<feature type="binding site" evidence="1">
    <location>
        <position position="213"/>
    </location>
    <ligand>
        <name>substrate</name>
    </ligand>
</feature>
<feature type="binding site" evidence="1">
    <location>
        <position position="251"/>
    </location>
    <ligand>
        <name>substrate</name>
    </ligand>
</feature>
<feature type="binding site" evidence="1">
    <location>
        <position position="364"/>
    </location>
    <ligand>
        <name>substrate</name>
    </ligand>
</feature>
<evidence type="ECO:0000255" key="1">
    <source>
        <dbReference type="HAMAP-Rule" id="MF_01172"/>
    </source>
</evidence>
<evidence type="ECO:0000305" key="2"/>
<comment type="function">
    <text evidence="1">Catalyzes the hydrolysis of N(2)-succinylarginine into N(2)-succinylornithine, ammonia and CO(2).</text>
</comment>
<comment type="catalytic activity">
    <reaction evidence="1">
        <text>N(2)-succinyl-L-arginine + 2 H2O + 2 H(+) = N(2)-succinyl-L-ornithine + 2 NH4(+) + CO2</text>
        <dbReference type="Rhea" id="RHEA:19533"/>
        <dbReference type="ChEBI" id="CHEBI:15377"/>
        <dbReference type="ChEBI" id="CHEBI:15378"/>
        <dbReference type="ChEBI" id="CHEBI:16526"/>
        <dbReference type="ChEBI" id="CHEBI:28938"/>
        <dbReference type="ChEBI" id="CHEBI:58241"/>
        <dbReference type="ChEBI" id="CHEBI:58514"/>
        <dbReference type="EC" id="3.5.3.23"/>
    </reaction>
</comment>
<comment type="pathway">
    <text evidence="1">Amino-acid degradation; L-arginine degradation via AST pathway; L-glutamate and succinate from L-arginine: step 2/5.</text>
</comment>
<comment type="subunit">
    <text evidence="1">Homodimer.</text>
</comment>
<comment type="similarity">
    <text evidence="1">Belongs to the succinylarginine dihydrolase family.</text>
</comment>
<comment type="sequence caution" evidence="2">
    <conflict type="erroneous initiation">
        <sequence resource="EMBL-CDS" id="AAM85904"/>
    </conflict>
</comment>
<comment type="sequence caution" evidence="2">
    <conflict type="erroneous initiation">
        <sequence resource="EMBL-CDS" id="AAS61939"/>
    </conflict>
</comment>
<organism>
    <name type="scientific">Yersinia pestis</name>
    <dbReference type="NCBI Taxonomy" id="632"/>
    <lineage>
        <taxon>Bacteria</taxon>
        <taxon>Pseudomonadati</taxon>
        <taxon>Pseudomonadota</taxon>
        <taxon>Gammaproteobacteria</taxon>
        <taxon>Enterobacterales</taxon>
        <taxon>Yersiniaceae</taxon>
        <taxon>Yersinia</taxon>
    </lineage>
</organism>
<sequence>MAGYEVNFDGLVGLTHHYAGLSFGNEASTTHQNRTSNPRLAAKQGLLKMKALADLGYKQGVLPPQERPAIGVLRKLGFSGSDEQVLSDVARNAPRLLSAVSSASSMWTANAATVSPSADSADGRVHFTVANLHNKFHRAIEAETTAVLLPAVFNNHRHFVHHDALPSVTLLGDEGAANHNRLGGEYDSPAIQMFVYGRQGMESGAVPGRYPARQTREASQAVARLHQLDPKRTVFVQQNPAVIDQGVFHNDVIAVSNRNVLFHHELAFLSSTQVMDDIRCKMAGLEQQLVNIEVPEAEVSVADAVSTYLFNSQLLHKANGKMLLVIPQESQDNPSVWRYLSELVSGDGPIDELRVFDLRESMRNGGGPACLRLRVVLNDAELQAVNSRVMLTPALFVTLNNWVDQHYRDHLQFKDLADPHLLQEGRQALDELTRILNLGPVYPFQRN</sequence>
<accession>Q8D0D8</accession>
<accession>Q74UK3</accession>
<accession>Q9ZC69</accession>
<dbReference type="EC" id="3.5.3.23" evidence="1"/>
<dbReference type="EMBL" id="AL031866">
    <property type="protein sequence ID" value="CAA21338.1"/>
    <property type="molecule type" value="Genomic_DNA"/>
</dbReference>
<dbReference type="EMBL" id="AL590842">
    <property type="protein sequence ID" value="CAL20603.1"/>
    <property type="molecule type" value="Genomic_DNA"/>
</dbReference>
<dbReference type="EMBL" id="AE009952">
    <property type="protein sequence ID" value="AAM85904.1"/>
    <property type="status" value="ALT_INIT"/>
    <property type="molecule type" value="Genomic_DNA"/>
</dbReference>
<dbReference type="EMBL" id="AE017042">
    <property type="protein sequence ID" value="AAS61939.1"/>
    <property type="status" value="ALT_INIT"/>
    <property type="molecule type" value="Genomic_DNA"/>
</dbReference>
<dbReference type="PIR" id="AH0239">
    <property type="entry name" value="AH0239"/>
</dbReference>
<dbReference type="PIR" id="T46995">
    <property type="entry name" value="T46995"/>
</dbReference>
<dbReference type="RefSeq" id="WP_002212029.1">
    <property type="nucleotide sequence ID" value="NZ_WHLN01000038.1"/>
</dbReference>
<dbReference type="RefSeq" id="YP_002346954.1">
    <property type="nucleotide sequence ID" value="NC_003143.1"/>
</dbReference>
<dbReference type="SMR" id="Q8D0D8"/>
<dbReference type="STRING" id="214092.YPO1965"/>
<dbReference type="PaxDb" id="214092-YPO1965"/>
<dbReference type="EnsemblBacteria" id="AAS61939">
    <property type="protein sequence ID" value="AAS61939"/>
    <property type="gene ID" value="YP_1710"/>
</dbReference>
<dbReference type="GeneID" id="49786049"/>
<dbReference type="KEGG" id="ype:YPO1965"/>
<dbReference type="KEGG" id="ypk:y2346"/>
<dbReference type="KEGG" id="ypl:CH46_3149"/>
<dbReference type="KEGG" id="ypm:YP_1710"/>
<dbReference type="KEGG" id="ypv:BZ15_1576"/>
<dbReference type="KEGG" id="ypw:CH59_3763"/>
<dbReference type="PATRIC" id="fig|214092.21.peg.2342"/>
<dbReference type="eggNOG" id="COG3724">
    <property type="taxonomic scope" value="Bacteria"/>
</dbReference>
<dbReference type="HOGENOM" id="CLU_053835_0_0_6"/>
<dbReference type="OMA" id="RVAMNDQ"/>
<dbReference type="OrthoDB" id="248552at2"/>
<dbReference type="UniPathway" id="UPA00185">
    <property type="reaction ID" value="UER00280"/>
</dbReference>
<dbReference type="Proteomes" id="UP000000815">
    <property type="component" value="Chromosome"/>
</dbReference>
<dbReference type="Proteomes" id="UP000001019">
    <property type="component" value="Chromosome"/>
</dbReference>
<dbReference type="Proteomes" id="UP000002490">
    <property type="component" value="Chromosome"/>
</dbReference>
<dbReference type="GO" id="GO:0009015">
    <property type="term" value="F:N-succinylarginine dihydrolase activity"/>
    <property type="evidence" value="ECO:0000318"/>
    <property type="project" value="GO_Central"/>
</dbReference>
<dbReference type="GO" id="GO:0006527">
    <property type="term" value="P:arginine catabolic process"/>
    <property type="evidence" value="ECO:0000318"/>
    <property type="project" value="GO_Central"/>
</dbReference>
<dbReference type="GO" id="GO:0019544">
    <property type="term" value="P:arginine catabolic process to glutamate"/>
    <property type="evidence" value="ECO:0007669"/>
    <property type="project" value="UniProtKB-UniRule"/>
</dbReference>
<dbReference type="GO" id="GO:0019545">
    <property type="term" value="P:arginine catabolic process to succinate"/>
    <property type="evidence" value="ECO:0007669"/>
    <property type="project" value="UniProtKB-UniRule"/>
</dbReference>
<dbReference type="Gene3D" id="3.75.10.20">
    <property type="entry name" value="Succinylarginine dihydrolase"/>
    <property type="match status" value="1"/>
</dbReference>
<dbReference type="HAMAP" id="MF_01172">
    <property type="entry name" value="AstB"/>
    <property type="match status" value="1"/>
</dbReference>
<dbReference type="InterPro" id="IPR037031">
    <property type="entry name" value="AstB_sf"/>
</dbReference>
<dbReference type="InterPro" id="IPR007079">
    <property type="entry name" value="SuccinylArg_d-Hdrlase_AstB"/>
</dbReference>
<dbReference type="NCBIfam" id="TIGR03241">
    <property type="entry name" value="arg_catab_astB"/>
    <property type="match status" value="1"/>
</dbReference>
<dbReference type="NCBIfam" id="NF009789">
    <property type="entry name" value="PRK13281.1"/>
    <property type="match status" value="1"/>
</dbReference>
<dbReference type="PANTHER" id="PTHR30420">
    <property type="entry name" value="N-SUCCINYLARGININE DIHYDROLASE"/>
    <property type="match status" value="1"/>
</dbReference>
<dbReference type="PANTHER" id="PTHR30420:SF2">
    <property type="entry name" value="N-SUCCINYLARGININE DIHYDROLASE"/>
    <property type="match status" value="1"/>
</dbReference>
<dbReference type="Pfam" id="PF04996">
    <property type="entry name" value="AstB"/>
    <property type="match status" value="1"/>
</dbReference>
<dbReference type="SUPFAM" id="SSF55909">
    <property type="entry name" value="Pentein"/>
    <property type="match status" value="1"/>
</dbReference>
<protein>
    <recommendedName>
        <fullName evidence="1">N-succinylarginine dihydrolase</fullName>
        <ecNumber evidence="1">3.5.3.23</ecNumber>
    </recommendedName>
</protein>
<keyword id="KW-0056">Arginine metabolism</keyword>
<keyword id="KW-0378">Hydrolase</keyword>
<keyword id="KW-1185">Reference proteome</keyword>